<sequence>MVPMTIKVAVAGASGYAGGEILRLLLGHPAYASGELEIGALTAASTVGSTVAELMPHLPQLADRVIEDTTKEVLAGHDVVFLGLPHGFSAEIANQLGPEVTVIDCAADFRLTNADDWSKFYGSEHAGSWPYGIPEMPGHREQLKGATRVAVPGCFPTGATLALLPAVQADLIEPDISVVSITGVSGAGKKASVPLLGSETMGSLKAYNTSGKHRHTPELTQNLKEVTDKDVTISFTPVLAPLPRGILTTATAPLIDGVTQEQARKVYEDFYVDEPFVLVLPEGVQPQTQNVVGSNMCHVQIEVDTVARKVLVTSAIDNLTKGTGGAAVQCMNLALGFEETAGLPRTGVAP</sequence>
<keyword id="KW-0028">Amino-acid biosynthesis</keyword>
<keyword id="KW-0055">Arginine biosynthesis</keyword>
<keyword id="KW-0963">Cytoplasm</keyword>
<keyword id="KW-0521">NADP</keyword>
<keyword id="KW-0560">Oxidoreductase</keyword>
<keyword id="KW-1185">Reference proteome</keyword>
<organism>
    <name type="scientific">Corynebacterium efficiens (strain DSM 44549 / YS-314 / AJ 12310 / JCM 11189 / NBRC 100395)</name>
    <dbReference type="NCBI Taxonomy" id="196164"/>
    <lineage>
        <taxon>Bacteria</taxon>
        <taxon>Bacillati</taxon>
        <taxon>Actinomycetota</taxon>
        <taxon>Actinomycetes</taxon>
        <taxon>Mycobacteriales</taxon>
        <taxon>Corynebacteriaceae</taxon>
        <taxon>Corynebacterium</taxon>
    </lineage>
</organism>
<comment type="function">
    <text evidence="1">Catalyzes the NADPH-dependent reduction of N-acetyl-5-glutamyl phosphate to yield N-acetyl-L-glutamate 5-semialdehyde.</text>
</comment>
<comment type="catalytic activity">
    <reaction evidence="1">
        <text>N-acetyl-L-glutamate 5-semialdehyde + phosphate + NADP(+) = N-acetyl-L-glutamyl 5-phosphate + NADPH + H(+)</text>
        <dbReference type="Rhea" id="RHEA:21588"/>
        <dbReference type="ChEBI" id="CHEBI:15378"/>
        <dbReference type="ChEBI" id="CHEBI:29123"/>
        <dbReference type="ChEBI" id="CHEBI:43474"/>
        <dbReference type="ChEBI" id="CHEBI:57783"/>
        <dbReference type="ChEBI" id="CHEBI:57936"/>
        <dbReference type="ChEBI" id="CHEBI:58349"/>
        <dbReference type="EC" id="1.2.1.38"/>
    </reaction>
</comment>
<comment type="pathway">
    <text evidence="1">Amino-acid biosynthesis; L-arginine biosynthesis; N(2)-acetyl-L-ornithine from L-glutamate: step 3/4.</text>
</comment>
<comment type="subcellular location">
    <subcellularLocation>
        <location evidence="1">Cytoplasm</location>
    </subcellularLocation>
</comment>
<comment type="similarity">
    <text evidence="1">Belongs to the NAGSA dehydrogenase family. Type 1 subfamily.</text>
</comment>
<name>ARGC_COREF</name>
<dbReference type="EC" id="1.2.1.38" evidence="1"/>
<dbReference type="EMBL" id="BA000035">
    <property type="protein sequence ID" value="BAC18336.1"/>
    <property type="molecule type" value="Genomic_DNA"/>
</dbReference>
<dbReference type="SMR" id="Q8FTN5"/>
<dbReference type="STRING" id="196164.gene:10741941"/>
<dbReference type="KEGG" id="cef:CE1526"/>
<dbReference type="eggNOG" id="COG0002">
    <property type="taxonomic scope" value="Bacteria"/>
</dbReference>
<dbReference type="HOGENOM" id="CLU_006384_0_0_11"/>
<dbReference type="UniPathway" id="UPA00068">
    <property type="reaction ID" value="UER00108"/>
</dbReference>
<dbReference type="Proteomes" id="UP000001409">
    <property type="component" value="Chromosome"/>
</dbReference>
<dbReference type="GO" id="GO:0005737">
    <property type="term" value="C:cytoplasm"/>
    <property type="evidence" value="ECO:0007669"/>
    <property type="project" value="UniProtKB-SubCell"/>
</dbReference>
<dbReference type="GO" id="GO:0003942">
    <property type="term" value="F:N-acetyl-gamma-glutamyl-phosphate reductase activity"/>
    <property type="evidence" value="ECO:0007669"/>
    <property type="project" value="UniProtKB-UniRule"/>
</dbReference>
<dbReference type="GO" id="GO:0051287">
    <property type="term" value="F:NAD binding"/>
    <property type="evidence" value="ECO:0007669"/>
    <property type="project" value="InterPro"/>
</dbReference>
<dbReference type="GO" id="GO:0070401">
    <property type="term" value="F:NADP+ binding"/>
    <property type="evidence" value="ECO:0007669"/>
    <property type="project" value="InterPro"/>
</dbReference>
<dbReference type="GO" id="GO:0006526">
    <property type="term" value="P:L-arginine biosynthetic process"/>
    <property type="evidence" value="ECO:0007669"/>
    <property type="project" value="UniProtKB-UniRule"/>
</dbReference>
<dbReference type="CDD" id="cd24148">
    <property type="entry name" value="AGPR_1_actinobacAGPR_like"/>
    <property type="match status" value="1"/>
</dbReference>
<dbReference type="CDD" id="cd23934">
    <property type="entry name" value="AGPR_1_C"/>
    <property type="match status" value="1"/>
</dbReference>
<dbReference type="FunFam" id="3.30.360.10:FF:000014">
    <property type="entry name" value="N-acetyl-gamma-glutamyl-phosphate reductase"/>
    <property type="match status" value="1"/>
</dbReference>
<dbReference type="Gene3D" id="3.30.360.10">
    <property type="entry name" value="Dihydrodipicolinate Reductase, domain 2"/>
    <property type="match status" value="1"/>
</dbReference>
<dbReference type="Gene3D" id="3.40.50.720">
    <property type="entry name" value="NAD(P)-binding Rossmann-like Domain"/>
    <property type="match status" value="1"/>
</dbReference>
<dbReference type="HAMAP" id="MF_00150">
    <property type="entry name" value="ArgC_type1"/>
    <property type="match status" value="1"/>
</dbReference>
<dbReference type="InterPro" id="IPR023013">
    <property type="entry name" value="AGPR_AS"/>
</dbReference>
<dbReference type="InterPro" id="IPR000706">
    <property type="entry name" value="AGPR_type-1"/>
</dbReference>
<dbReference type="InterPro" id="IPR036291">
    <property type="entry name" value="NAD(P)-bd_dom_sf"/>
</dbReference>
<dbReference type="InterPro" id="IPR050085">
    <property type="entry name" value="NAGSA_dehydrogenase"/>
</dbReference>
<dbReference type="InterPro" id="IPR000534">
    <property type="entry name" value="Semialdehyde_DH_NAD-bd"/>
</dbReference>
<dbReference type="NCBIfam" id="TIGR01850">
    <property type="entry name" value="argC"/>
    <property type="match status" value="1"/>
</dbReference>
<dbReference type="PANTHER" id="PTHR32338:SF10">
    <property type="entry name" value="N-ACETYL-GAMMA-GLUTAMYL-PHOSPHATE REDUCTASE, CHLOROPLASTIC-RELATED"/>
    <property type="match status" value="1"/>
</dbReference>
<dbReference type="PANTHER" id="PTHR32338">
    <property type="entry name" value="N-ACETYL-GAMMA-GLUTAMYL-PHOSPHATE REDUCTASE, CHLOROPLASTIC-RELATED-RELATED"/>
    <property type="match status" value="1"/>
</dbReference>
<dbReference type="Pfam" id="PF01118">
    <property type="entry name" value="Semialdhyde_dh"/>
    <property type="match status" value="1"/>
</dbReference>
<dbReference type="Pfam" id="PF22698">
    <property type="entry name" value="Semialdhyde_dhC_1"/>
    <property type="match status" value="1"/>
</dbReference>
<dbReference type="SMART" id="SM00859">
    <property type="entry name" value="Semialdhyde_dh"/>
    <property type="match status" value="1"/>
</dbReference>
<dbReference type="SUPFAM" id="SSF55347">
    <property type="entry name" value="Glyceraldehyde-3-phosphate dehydrogenase-like, C-terminal domain"/>
    <property type="match status" value="1"/>
</dbReference>
<dbReference type="SUPFAM" id="SSF51735">
    <property type="entry name" value="NAD(P)-binding Rossmann-fold domains"/>
    <property type="match status" value="1"/>
</dbReference>
<dbReference type="PROSITE" id="PS01224">
    <property type="entry name" value="ARGC"/>
    <property type="match status" value="1"/>
</dbReference>
<protein>
    <recommendedName>
        <fullName evidence="1">N-acetyl-gamma-glutamyl-phosphate reductase</fullName>
        <shortName evidence="1">AGPR</shortName>
        <ecNumber evidence="1">1.2.1.38</ecNumber>
    </recommendedName>
    <alternativeName>
        <fullName evidence="1">N-acetyl-glutamate semialdehyde dehydrogenase</fullName>
        <shortName evidence="1">NAGSA dehydrogenase</shortName>
    </alternativeName>
</protein>
<proteinExistence type="inferred from homology"/>
<feature type="chain" id="PRO_0000112399" description="N-acetyl-gamma-glutamyl-phosphate reductase">
    <location>
        <begin position="1"/>
        <end position="350"/>
    </location>
</feature>
<feature type="active site" evidence="1">
    <location>
        <position position="154"/>
    </location>
</feature>
<accession>Q8FTN5</accession>
<gene>
    <name evidence="1" type="primary">argC</name>
    <name type="ordered locus">CE1526</name>
</gene>
<evidence type="ECO:0000255" key="1">
    <source>
        <dbReference type="HAMAP-Rule" id="MF_00150"/>
    </source>
</evidence>
<reference key="1">
    <citation type="journal article" date="2003" name="Genome Res.">
        <title>Comparative complete genome sequence analysis of the amino acid replacements responsible for the thermostability of Corynebacterium efficiens.</title>
        <authorList>
            <person name="Nishio Y."/>
            <person name="Nakamura Y."/>
            <person name="Kawarabayasi Y."/>
            <person name="Usuda Y."/>
            <person name="Kimura E."/>
            <person name="Sugimoto S."/>
            <person name="Matsui K."/>
            <person name="Yamagishi A."/>
            <person name="Kikuchi H."/>
            <person name="Ikeo K."/>
            <person name="Gojobori T."/>
        </authorList>
    </citation>
    <scope>NUCLEOTIDE SEQUENCE [LARGE SCALE GENOMIC DNA]</scope>
    <source>
        <strain>DSM 44549 / YS-314 / AJ 12310 / JCM 11189 / NBRC 100395</strain>
    </source>
</reference>